<dbReference type="EC" id="2.7.7.6" evidence="1"/>
<dbReference type="EMBL" id="CP000510">
    <property type="protein sequence ID" value="ABM05182.1"/>
    <property type="molecule type" value="Genomic_DNA"/>
</dbReference>
<dbReference type="RefSeq" id="WP_011771733.1">
    <property type="nucleotide sequence ID" value="NC_008709.1"/>
</dbReference>
<dbReference type="SMR" id="A1T0B7"/>
<dbReference type="STRING" id="357804.Ping_3499"/>
<dbReference type="KEGG" id="pin:Ping_3499"/>
<dbReference type="eggNOG" id="COG0202">
    <property type="taxonomic scope" value="Bacteria"/>
</dbReference>
<dbReference type="HOGENOM" id="CLU_053084_0_0_6"/>
<dbReference type="OrthoDB" id="9805706at2"/>
<dbReference type="Proteomes" id="UP000000639">
    <property type="component" value="Chromosome"/>
</dbReference>
<dbReference type="GO" id="GO:0005737">
    <property type="term" value="C:cytoplasm"/>
    <property type="evidence" value="ECO:0007669"/>
    <property type="project" value="UniProtKB-ARBA"/>
</dbReference>
<dbReference type="GO" id="GO:0000428">
    <property type="term" value="C:DNA-directed RNA polymerase complex"/>
    <property type="evidence" value="ECO:0007669"/>
    <property type="project" value="UniProtKB-KW"/>
</dbReference>
<dbReference type="GO" id="GO:0003677">
    <property type="term" value="F:DNA binding"/>
    <property type="evidence" value="ECO:0007669"/>
    <property type="project" value="UniProtKB-UniRule"/>
</dbReference>
<dbReference type="GO" id="GO:0003899">
    <property type="term" value="F:DNA-directed RNA polymerase activity"/>
    <property type="evidence" value="ECO:0007669"/>
    <property type="project" value="UniProtKB-UniRule"/>
</dbReference>
<dbReference type="GO" id="GO:0046983">
    <property type="term" value="F:protein dimerization activity"/>
    <property type="evidence" value="ECO:0007669"/>
    <property type="project" value="InterPro"/>
</dbReference>
<dbReference type="GO" id="GO:0006351">
    <property type="term" value="P:DNA-templated transcription"/>
    <property type="evidence" value="ECO:0007669"/>
    <property type="project" value="UniProtKB-UniRule"/>
</dbReference>
<dbReference type="CDD" id="cd06928">
    <property type="entry name" value="RNAP_alpha_NTD"/>
    <property type="match status" value="1"/>
</dbReference>
<dbReference type="FunFam" id="1.10.150.20:FF:000001">
    <property type="entry name" value="DNA-directed RNA polymerase subunit alpha"/>
    <property type="match status" value="1"/>
</dbReference>
<dbReference type="FunFam" id="2.170.120.12:FF:000001">
    <property type="entry name" value="DNA-directed RNA polymerase subunit alpha"/>
    <property type="match status" value="1"/>
</dbReference>
<dbReference type="Gene3D" id="1.10.150.20">
    <property type="entry name" value="5' to 3' exonuclease, C-terminal subdomain"/>
    <property type="match status" value="1"/>
</dbReference>
<dbReference type="Gene3D" id="2.170.120.12">
    <property type="entry name" value="DNA-directed RNA polymerase, insert domain"/>
    <property type="match status" value="1"/>
</dbReference>
<dbReference type="Gene3D" id="3.30.1360.10">
    <property type="entry name" value="RNA polymerase, RBP11-like subunit"/>
    <property type="match status" value="1"/>
</dbReference>
<dbReference type="HAMAP" id="MF_00059">
    <property type="entry name" value="RNApol_bact_RpoA"/>
    <property type="match status" value="1"/>
</dbReference>
<dbReference type="InterPro" id="IPR011262">
    <property type="entry name" value="DNA-dir_RNA_pol_insert"/>
</dbReference>
<dbReference type="InterPro" id="IPR011263">
    <property type="entry name" value="DNA-dir_RNA_pol_RpoA/D/Rpb3"/>
</dbReference>
<dbReference type="InterPro" id="IPR011773">
    <property type="entry name" value="DNA-dir_RpoA"/>
</dbReference>
<dbReference type="InterPro" id="IPR036603">
    <property type="entry name" value="RBP11-like"/>
</dbReference>
<dbReference type="InterPro" id="IPR011260">
    <property type="entry name" value="RNAP_asu_C"/>
</dbReference>
<dbReference type="InterPro" id="IPR036643">
    <property type="entry name" value="RNApol_insert_sf"/>
</dbReference>
<dbReference type="NCBIfam" id="NF003513">
    <property type="entry name" value="PRK05182.1-2"/>
    <property type="match status" value="1"/>
</dbReference>
<dbReference type="NCBIfam" id="NF003519">
    <property type="entry name" value="PRK05182.2-5"/>
    <property type="match status" value="1"/>
</dbReference>
<dbReference type="NCBIfam" id="TIGR02027">
    <property type="entry name" value="rpoA"/>
    <property type="match status" value="1"/>
</dbReference>
<dbReference type="Pfam" id="PF01000">
    <property type="entry name" value="RNA_pol_A_bac"/>
    <property type="match status" value="1"/>
</dbReference>
<dbReference type="Pfam" id="PF03118">
    <property type="entry name" value="RNA_pol_A_CTD"/>
    <property type="match status" value="1"/>
</dbReference>
<dbReference type="Pfam" id="PF01193">
    <property type="entry name" value="RNA_pol_L"/>
    <property type="match status" value="1"/>
</dbReference>
<dbReference type="SMART" id="SM00662">
    <property type="entry name" value="RPOLD"/>
    <property type="match status" value="1"/>
</dbReference>
<dbReference type="SUPFAM" id="SSF47789">
    <property type="entry name" value="C-terminal domain of RNA polymerase alpha subunit"/>
    <property type="match status" value="1"/>
</dbReference>
<dbReference type="SUPFAM" id="SSF56553">
    <property type="entry name" value="Insert subdomain of RNA polymerase alpha subunit"/>
    <property type="match status" value="1"/>
</dbReference>
<dbReference type="SUPFAM" id="SSF55257">
    <property type="entry name" value="RBP11-like subunits of RNA polymerase"/>
    <property type="match status" value="1"/>
</dbReference>
<sequence>MQGSVIEFLKPNLVGIEQINATRAKVTLGPLERGFGHTLGNALRRILLSSMPGTAVTEVEIDGVQHEYSTKEGVQEDILEILLNLKGLAVKLEGKDNVLVSLTKSGAGPVTAGDITHGSDVEIVNPEHVICHLTGNAEISMRIKIESGRGYVPASSRIHTEEDERPIGRLLVDATFSPVERIAYSVESARVEQRTDLDKLVIDMETDGTLDPEEAIRRAATILAEQLDAFVDLRKVSEPVAKEEKPEFDPILLRPVDDLELTVRSANCLKAETIHYIGDLVQRTEVELLKTPNLGKKSLTEIKDVLASRGLSLGMRLENWPPASLSED</sequence>
<reference key="1">
    <citation type="journal article" date="2008" name="BMC Genomics">
        <title>Genomics of an extreme psychrophile, Psychromonas ingrahamii.</title>
        <authorList>
            <person name="Riley M."/>
            <person name="Staley J.T."/>
            <person name="Danchin A."/>
            <person name="Wang T.Z."/>
            <person name="Brettin T.S."/>
            <person name="Hauser L.J."/>
            <person name="Land M.L."/>
            <person name="Thompson L.S."/>
        </authorList>
    </citation>
    <scope>NUCLEOTIDE SEQUENCE [LARGE SCALE GENOMIC DNA]</scope>
    <source>
        <strain>DSM 17664 / CCUG 51855 / 37</strain>
    </source>
</reference>
<gene>
    <name evidence="1" type="primary">rpoA2</name>
    <name type="ordered locus">Ping_3499</name>
</gene>
<name>RPOA2_PSYIN</name>
<organism>
    <name type="scientific">Psychromonas ingrahamii (strain DSM 17664 / CCUG 51855 / 37)</name>
    <dbReference type="NCBI Taxonomy" id="357804"/>
    <lineage>
        <taxon>Bacteria</taxon>
        <taxon>Pseudomonadati</taxon>
        <taxon>Pseudomonadota</taxon>
        <taxon>Gammaproteobacteria</taxon>
        <taxon>Alteromonadales</taxon>
        <taxon>Psychromonadaceae</taxon>
        <taxon>Psychromonas</taxon>
    </lineage>
</organism>
<accession>A1T0B7</accession>
<feature type="chain" id="PRO_0000296859" description="DNA-directed RNA polymerase subunit alpha 2">
    <location>
        <begin position="1"/>
        <end position="328"/>
    </location>
</feature>
<feature type="region of interest" description="Alpha N-terminal domain (alpha-NTD)" evidence="1">
    <location>
        <begin position="1"/>
        <end position="234"/>
    </location>
</feature>
<feature type="region of interest" description="Alpha C-terminal domain (alpha-CTD)" evidence="1">
    <location>
        <begin position="248"/>
        <end position="328"/>
    </location>
</feature>
<proteinExistence type="inferred from homology"/>
<protein>
    <recommendedName>
        <fullName evidence="1">DNA-directed RNA polymerase subunit alpha 2</fullName>
        <shortName evidence="1">RNAP subunit alpha 2</shortName>
        <ecNumber evidence="1">2.7.7.6</ecNumber>
    </recommendedName>
    <alternativeName>
        <fullName evidence="1">RNA polymerase subunit alpha 2</fullName>
    </alternativeName>
    <alternativeName>
        <fullName evidence="1">Transcriptase subunit alpha 2</fullName>
    </alternativeName>
</protein>
<evidence type="ECO:0000255" key="1">
    <source>
        <dbReference type="HAMAP-Rule" id="MF_00059"/>
    </source>
</evidence>
<keyword id="KW-0240">DNA-directed RNA polymerase</keyword>
<keyword id="KW-0548">Nucleotidyltransferase</keyword>
<keyword id="KW-1185">Reference proteome</keyword>
<keyword id="KW-0804">Transcription</keyword>
<keyword id="KW-0808">Transferase</keyword>
<comment type="function">
    <text evidence="1">DNA-dependent RNA polymerase catalyzes the transcription of DNA into RNA using the four ribonucleoside triphosphates as substrates.</text>
</comment>
<comment type="catalytic activity">
    <reaction evidence="1">
        <text>RNA(n) + a ribonucleoside 5'-triphosphate = RNA(n+1) + diphosphate</text>
        <dbReference type="Rhea" id="RHEA:21248"/>
        <dbReference type="Rhea" id="RHEA-COMP:14527"/>
        <dbReference type="Rhea" id="RHEA-COMP:17342"/>
        <dbReference type="ChEBI" id="CHEBI:33019"/>
        <dbReference type="ChEBI" id="CHEBI:61557"/>
        <dbReference type="ChEBI" id="CHEBI:140395"/>
        <dbReference type="EC" id="2.7.7.6"/>
    </reaction>
</comment>
<comment type="subunit">
    <text evidence="1">Homodimer. The RNAP catalytic core consists of 2 alpha, 1 beta, 1 beta' and 1 omega subunit. When a sigma factor is associated with the core the holoenzyme is formed, which can initiate transcription.</text>
</comment>
<comment type="domain">
    <text evidence="1">The N-terminal domain is essential for RNAP assembly and basal transcription, whereas the C-terminal domain is involved in interaction with transcriptional regulators and with upstream promoter elements.</text>
</comment>
<comment type="similarity">
    <text evidence="1">Belongs to the RNA polymerase alpha chain family.</text>
</comment>